<accession>A5V3V0</accession>
<feature type="chain" id="PRO_1000015907" description="Glutamyl-tRNA(Gln) amidotransferase subunit A">
    <location>
        <begin position="1"/>
        <end position="495"/>
    </location>
</feature>
<feature type="active site" description="Charge relay system" evidence="1">
    <location>
        <position position="78"/>
    </location>
</feature>
<feature type="active site" description="Charge relay system" evidence="1">
    <location>
        <position position="159"/>
    </location>
</feature>
<feature type="active site" description="Acyl-ester intermediate" evidence="1">
    <location>
        <position position="183"/>
    </location>
</feature>
<keyword id="KW-0067">ATP-binding</keyword>
<keyword id="KW-0436">Ligase</keyword>
<keyword id="KW-0547">Nucleotide-binding</keyword>
<keyword id="KW-0648">Protein biosynthesis</keyword>
<keyword id="KW-1185">Reference proteome</keyword>
<evidence type="ECO:0000255" key="1">
    <source>
        <dbReference type="HAMAP-Rule" id="MF_00120"/>
    </source>
</evidence>
<name>GATA_RHIWR</name>
<organism>
    <name type="scientific">Rhizorhabdus wittichii (strain DSM 6014 / CCUG 31198 / JCM 15750 / NBRC 105917 / EY 4224 / RW1)</name>
    <name type="common">Sphingomonas wittichii</name>
    <dbReference type="NCBI Taxonomy" id="392499"/>
    <lineage>
        <taxon>Bacteria</taxon>
        <taxon>Pseudomonadati</taxon>
        <taxon>Pseudomonadota</taxon>
        <taxon>Alphaproteobacteria</taxon>
        <taxon>Sphingomonadales</taxon>
        <taxon>Sphingomonadaceae</taxon>
        <taxon>Rhizorhabdus</taxon>
    </lineage>
</organism>
<sequence length="495" mass="51816">MTAITDLGLAGLRDGFRAGDFSAREIADAFNGAVAGAKALNAFIIETPDHATAAAEAADRARAAGELLPLSGVPLGIKDLFCTAGHQTTAASHMLGGFTPTYESTVTGKLFAAGAGMLGKLNLDQFAMGSSNETSAYGNVVSPWRRNDGGNAPLAPGGSSGGSSSAIAARIVPAATGTDTGGSIRQPAAFTGIAGIKPTYGRCSRFGIVAFASSLDQAGAMAQDVRDSAILLEAMSGFDPKDSTSLDVAVPKWEANLSSDLKGKKVGIPKEYRVDNMPAEIDALWRQGIEWLRDAGAEIVDVSLPHTRYALPTYYIIAPAEASSNLARYDGVRYGLRDLPEGANLQEMYAATRAAGFGPEVKRRILIGTYVLSAGYYDAYYTKAQKVRALIARDFEEAFRQVDVLLTPTAPSAAFALGEKSADPLEMYLNDVFTVPASLAGVPAMSVPAGLDGQGLPLGLQIIGRPLDEQGVLNAGLAIEQRAGFTAKPQNWWAK</sequence>
<protein>
    <recommendedName>
        <fullName evidence="1">Glutamyl-tRNA(Gln) amidotransferase subunit A</fullName>
        <shortName evidence="1">Glu-ADT subunit A</shortName>
        <ecNumber evidence="1">6.3.5.7</ecNumber>
    </recommendedName>
</protein>
<gene>
    <name evidence="1" type="primary">gatA</name>
    <name type="ordered locus">Swit_0598</name>
</gene>
<dbReference type="EC" id="6.3.5.7" evidence="1"/>
<dbReference type="EMBL" id="CP000699">
    <property type="protein sequence ID" value="ABQ66966.1"/>
    <property type="molecule type" value="Genomic_DNA"/>
</dbReference>
<dbReference type="SMR" id="A5V3V0"/>
<dbReference type="STRING" id="392499.Swit_0598"/>
<dbReference type="PaxDb" id="392499-Swit_0598"/>
<dbReference type="KEGG" id="swi:Swit_0598"/>
<dbReference type="eggNOG" id="COG0154">
    <property type="taxonomic scope" value="Bacteria"/>
</dbReference>
<dbReference type="HOGENOM" id="CLU_009600_0_3_5"/>
<dbReference type="OrthoDB" id="9811471at2"/>
<dbReference type="Proteomes" id="UP000001989">
    <property type="component" value="Chromosome"/>
</dbReference>
<dbReference type="GO" id="GO:0030956">
    <property type="term" value="C:glutamyl-tRNA(Gln) amidotransferase complex"/>
    <property type="evidence" value="ECO:0007669"/>
    <property type="project" value="InterPro"/>
</dbReference>
<dbReference type="GO" id="GO:0005524">
    <property type="term" value="F:ATP binding"/>
    <property type="evidence" value="ECO:0007669"/>
    <property type="project" value="UniProtKB-KW"/>
</dbReference>
<dbReference type="GO" id="GO:0050567">
    <property type="term" value="F:glutaminyl-tRNA synthase (glutamine-hydrolyzing) activity"/>
    <property type="evidence" value="ECO:0007669"/>
    <property type="project" value="UniProtKB-UniRule"/>
</dbReference>
<dbReference type="GO" id="GO:0006412">
    <property type="term" value="P:translation"/>
    <property type="evidence" value="ECO:0007669"/>
    <property type="project" value="UniProtKB-UniRule"/>
</dbReference>
<dbReference type="Gene3D" id="3.90.1300.10">
    <property type="entry name" value="Amidase signature (AS) domain"/>
    <property type="match status" value="1"/>
</dbReference>
<dbReference type="HAMAP" id="MF_00120">
    <property type="entry name" value="GatA"/>
    <property type="match status" value="1"/>
</dbReference>
<dbReference type="InterPro" id="IPR000120">
    <property type="entry name" value="Amidase"/>
</dbReference>
<dbReference type="InterPro" id="IPR020556">
    <property type="entry name" value="Amidase_CS"/>
</dbReference>
<dbReference type="InterPro" id="IPR023631">
    <property type="entry name" value="Amidase_dom"/>
</dbReference>
<dbReference type="InterPro" id="IPR036928">
    <property type="entry name" value="AS_sf"/>
</dbReference>
<dbReference type="InterPro" id="IPR004412">
    <property type="entry name" value="GatA"/>
</dbReference>
<dbReference type="NCBIfam" id="TIGR00132">
    <property type="entry name" value="gatA"/>
    <property type="match status" value="1"/>
</dbReference>
<dbReference type="PANTHER" id="PTHR11895:SF151">
    <property type="entry name" value="GLUTAMYL-TRNA(GLN) AMIDOTRANSFERASE SUBUNIT A"/>
    <property type="match status" value="1"/>
</dbReference>
<dbReference type="PANTHER" id="PTHR11895">
    <property type="entry name" value="TRANSAMIDASE"/>
    <property type="match status" value="1"/>
</dbReference>
<dbReference type="Pfam" id="PF01425">
    <property type="entry name" value="Amidase"/>
    <property type="match status" value="1"/>
</dbReference>
<dbReference type="SUPFAM" id="SSF75304">
    <property type="entry name" value="Amidase signature (AS) enzymes"/>
    <property type="match status" value="1"/>
</dbReference>
<dbReference type="PROSITE" id="PS00571">
    <property type="entry name" value="AMIDASES"/>
    <property type="match status" value="1"/>
</dbReference>
<reference key="1">
    <citation type="journal article" date="2010" name="J. Bacteriol.">
        <title>Genome sequence of the dioxin-mineralizing bacterium Sphingomonas wittichii RW1.</title>
        <authorList>
            <person name="Miller T.R."/>
            <person name="Delcher A.L."/>
            <person name="Salzberg S.L."/>
            <person name="Saunders E."/>
            <person name="Detter J.C."/>
            <person name="Halden R.U."/>
        </authorList>
    </citation>
    <scope>NUCLEOTIDE SEQUENCE [LARGE SCALE GENOMIC DNA]</scope>
    <source>
        <strain>DSM 6014 / CCUG 31198 / JCM 15750 / NBRC 105917 / EY 4224 / RW1</strain>
    </source>
</reference>
<comment type="function">
    <text evidence="1">Allows the formation of correctly charged Gln-tRNA(Gln) through the transamidation of misacylated Glu-tRNA(Gln) in organisms which lack glutaminyl-tRNA synthetase. The reaction takes place in the presence of glutamine and ATP through an activated gamma-phospho-Glu-tRNA(Gln).</text>
</comment>
<comment type="catalytic activity">
    <reaction evidence="1">
        <text>L-glutamyl-tRNA(Gln) + L-glutamine + ATP + H2O = L-glutaminyl-tRNA(Gln) + L-glutamate + ADP + phosphate + H(+)</text>
        <dbReference type="Rhea" id="RHEA:17521"/>
        <dbReference type="Rhea" id="RHEA-COMP:9681"/>
        <dbReference type="Rhea" id="RHEA-COMP:9684"/>
        <dbReference type="ChEBI" id="CHEBI:15377"/>
        <dbReference type="ChEBI" id="CHEBI:15378"/>
        <dbReference type="ChEBI" id="CHEBI:29985"/>
        <dbReference type="ChEBI" id="CHEBI:30616"/>
        <dbReference type="ChEBI" id="CHEBI:43474"/>
        <dbReference type="ChEBI" id="CHEBI:58359"/>
        <dbReference type="ChEBI" id="CHEBI:78520"/>
        <dbReference type="ChEBI" id="CHEBI:78521"/>
        <dbReference type="ChEBI" id="CHEBI:456216"/>
        <dbReference type="EC" id="6.3.5.7"/>
    </reaction>
</comment>
<comment type="subunit">
    <text evidence="1">Heterotrimer of A, B and C subunits.</text>
</comment>
<comment type="similarity">
    <text evidence="1">Belongs to the amidase family. GatA subfamily.</text>
</comment>
<proteinExistence type="inferred from homology"/>